<reference key="1">
    <citation type="journal article" date="2010" name="Genome Biol. Evol.">
        <title>Continuing evolution of Burkholderia mallei through genome reduction and large-scale rearrangements.</title>
        <authorList>
            <person name="Losada L."/>
            <person name="Ronning C.M."/>
            <person name="DeShazer D."/>
            <person name="Woods D."/>
            <person name="Fedorova N."/>
            <person name="Kim H.S."/>
            <person name="Shabalina S.A."/>
            <person name="Pearson T.R."/>
            <person name="Brinkac L."/>
            <person name="Tan P."/>
            <person name="Nandi T."/>
            <person name="Crabtree J."/>
            <person name="Badger J."/>
            <person name="Beckstrom-Sternberg S."/>
            <person name="Saqib M."/>
            <person name="Schutzer S.E."/>
            <person name="Keim P."/>
            <person name="Nierman W.C."/>
        </authorList>
    </citation>
    <scope>NUCLEOTIDE SEQUENCE [LARGE SCALE GENOMIC DNA]</scope>
    <source>
        <strain>SAVP1</strain>
    </source>
</reference>
<dbReference type="EMBL" id="CP000526">
    <property type="protein sequence ID" value="ABM50901.1"/>
    <property type="molecule type" value="Genomic_DNA"/>
</dbReference>
<dbReference type="RefSeq" id="WP_004197948.1">
    <property type="nucleotide sequence ID" value="NC_008785.1"/>
</dbReference>
<dbReference type="SMR" id="A1V890"/>
<dbReference type="GeneID" id="93061819"/>
<dbReference type="KEGG" id="bmv:BMASAVP1_A3156"/>
<dbReference type="HOGENOM" id="CLU_139869_0_1_4"/>
<dbReference type="GO" id="GO:0005737">
    <property type="term" value="C:cytoplasm"/>
    <property type="evidence" value="ECO:0007669"/>
    <property type="project" value="UniProtKB-ARBA"/>
</dbReference>
<dbReference type="GO" id="GO:0015935">
    <property type="term" value="C:small ribosomal subunit"/>
    <property type="evidence" value="ECO:0007669"/>
    <property type="project" value="TreeGrafter"/>
</dbReference>
<dbReference type="GO" id="GO:0019843">
    <property type="term" value="F:rRNA binding"/>
    <property type="evidence" value="ECO:0007669"/>
    <property type="project" value="UniProtKB-UniRule"/>
</dbReference>
<dbReference type="GO" id="GO:0003735">
    <property type="term" value="F:structural constituent of ribosome"/>
    <property type="evidence" value="ECO:0007669"/>
    <property type="project" value="InterPro"/>
</dbReference>
<dbReference type="GO" id="GO:0006412">
    <property type="term" value="P:translation"/>
    <property type="evidence" value="ECO:0007669"/>
    <property type="project" value="UniProtKB-UniRule"/>
</dbReference>
<dbReference type="FunFam" id="1.10.287.1480:FF:000001">
    <property type="entry name" value="30S ribosomal protein S14"/>
    <property type="match status" value="1"/>
</dbReference>
<dbReference type="Gene3D" id="1.10.287.1480">
    <property type="match status" value="1"/>
</dbReference>
<dbReference type="HAMAP" id="MF_00537">
    <property type="entry name" value="Ribosomal_uS14_1"/>
    <property type="match status" value="1"/>
</dbReference>
<dbReference type="InterPro" id="IPR001209">
    <property type="entry name" value="Ribosomal_uS14"/>
</dbReference>
<dbReference type="InterPro" id="IPR023036">
    <property type="entry name" value="Ribosomal_uS14_bac/plastid"/>
</dbReference>
<dbReference type="NCBIfam" id="NF006477">
    <property type="entry name" value="PRK08881.1"/>
    <property type="match status" value="1"/>
</dbReference>
<dbReference type="PANTHER" id="PTHR19836">
    <property type="entry name" value="30S RIBOSOMAL PROTEIN S14"/>
    <property type="match status" value="1"/>
</dbReference>
<dbReference type="PANTHER" id="PTHR19836:SF19">
    <property type="entry name" value="SMALL RIBOSOMAL SUBUNIT PROTEIN US14M"/>
    <property type="match status" value="1"/>
</dbReference>
<dbReference type="Pfam" id="PF00253">
    <property type="entry name" value="Ribosomal_S14"/>
    <property type="match status" value="1"/>
</dbReference>
<dbReference type="SUPFAM" id="SSF57716">
    <property type="entry name" value="Glucocorticoid receptor-like (DNA-binding domain)"/>
    <property type="match status" value="1"/>
</dbReference>
<accession>A1V890</accession>
<gene>
    <name evidence="1" type="primary">rpsN</name>
    <name type="ordered locus">BMASAVP1_A3156</name>
</gene>
<protein>
    <recommendedName>
        <fullName evidence="1">Small ribosomal subunit protein uS14</fullName>
    </recommendedName>
    <alternativeName>
        <fullName evidence="2">30S ribosomal protein S14</fullName>
    </alternativeName>
</protein>
<name>RS14_BURMS</name>
<evidence type="ECO:0000255" key="1">
    <source>
        <dbReference type="HAMAP-Rule" id="MF_00537"/>
    </source>
</evidence>
<evidence type="ECO:0000305" key="2"/>
<sequence>MAKLALIEREKKRARLAQKYAPKRAELKAIIDDASKSDEERYAARLELQQLPRNANPTRKRNRCAITGRPRGTFRKFGLARNKIREIAFRGEIPGLTKASW</sequence>
<keyword id="KW-0687">Ribonucleoprotein</keyword>
<keyword id="KW-0689">Ribosomal protein</keyword>
<keyword id="KW-0694">RNA-binding</keyword>
<keyword id="KW-0699">rRNA-binding</keyword>
<comment type="function">
    <text evidence="1">Binds 16S rRNA, required for the assembly of 30S particles and may also be responsible for determining the conformation of the 16S rRNA at the A site.</text>
</comment>
<comment type="subunit">
    <text evidence="1">Part of the 30S ribosomal subunit. Contacts proteins S3 and S10.</text>
</comment>
<comment type="similarity">
    <text evidence="1">Belongs to the universal ribosomal protein uS14 family.</text>
</comment>
<organism>
    <name type="scientific">Burkholderia mallei (strain SAVP1)</name>
    <dbReference type="NCBI Taxonomy" id="320388"/>
    <lineage>
        <taxon>Bacteria</taxon>
        <taxon>Pseudomonadati</taxon>
        <taxon>Pseudomonadota</taxon>
        <taxon>Betaproteobacteria</taxon>
        <taxon>Burkholderiales</taxon>
        <taxon>Burkholderiaceae</taxon>
        <taxon>Burkholderia</taxon>
        <taxon>pseudomallei group</taxon>
    </lineage>
</organism>
<feature type="chain" id="PRO_1000128336" description="Small ribosomal subunit protein uS14">
    <location>
        <begin position="1"/>
        <end position="101"/>
    </location>
</feature>
<proteinExistence type="inferred from homology"/>